<protein>
    <recommendedName>
        <fullName evidence="1">Cysteine desulfurase IscS</fullName>
        <ecNumber evidence="1">2.8.1.7</ecNumber>
    </recommendedName>
</protein>
<evidence type="ECO:0000255" key="1">
    <source>
        <dbReference type="HAMAP-Rule" id="MF_00331"/>
    </source>
</evidence>
<dbReference type="EC" id="2.8.1.7" evidence="1"/>
<dbReference type="EMBL" id="CU459141">
    <property type="protein sequence ID" value="CAM86898.1"/>
    <property type="molecule type" value="Genomic_DNA"/>
</dbReference>
<dbReference type="RefSeq" id="WP_000828390.1">
    <property type="nucleotide sequence ID" value="NZ_JBDGFB010000001.1"/>
</dbReference>
<dbReference type="SMR" id="B0VD51"/>
<dbReference type="EnsemblBacteria" id="CAM86898">
    <property type="protein sequence ID" value="CAM86898"/>
    <property type="gene ID" value="ABAYE2021"/>
</dbReference>
<dbReference type="KEGG" id="aby:ABAYE2021"/>
<dbReference type="HOGENOM" id="CLU_003433_0_2_6"/>
<dbReference type="UniPathway" id="UPA00266"/>
<dbReference type="GO" id="GO:1990221">
    <property type="term" value="C:L-cysteine desulfurase complex"/>
    <property type="evidence" value="ECO:0007669"/>
    <property type="project" value="UniProtKB-ARBA"/>
</dbReference>
<dbReference type="GO" id="GO:0051537">
    <property type="term" value="F:2 iron, 2 sulfur cluster binding"/>
    <property type="evidence" value="ECO:0007669"/>
    <property type="project" value="UniProtKB-UniRule"/>
</dbReference>
<dbReference type="GO" id="GO:0031071">
    <property type="term" value="F:cysteine desulfurase activity"/>
    <property type="evidence" value="ECO:0007669"/>
    <property type="project" value="UniProtKB-UniRule"/>
</dbReference>
<dbReference type="GO" id="GO:0046872">
    <property type="term" value="F:metal ion binding"/>
    <property type="evidence" value="ECO:0007669"/>
    <property type="project" value="UniProtKB-KW"/>
</dbReference>
<dbReference type="GO" id="GO:0030170">
    <property type="term" value="F:pyridoxal phosphate binding"/>
    <property type="evidence" value="ECO:0007669"/>
    <property type="project" value="UniProtKB-UniRule"/>
</dbReference>
<dbReference type="GO" id="GO:0044571">
    <property type="term" value="P:[2Fe-2S] cluster assembly"/>
    <property type="evidence" value="ECO:0007669"/>
    <property type="project" value="UniProtKB-UniRule"/>
</dbReference>
<dbReference type="FunFam" id="3.40.640.10:FF:000003">
    <property type="entry name" value="Cysteine desulfurase IscS"/>
    <property type="match status" value="1"/>
</dbReference>
<dbReference type="FunFam" id="3.90.1150.10:FF:000002">
    <property type="entry name" value="Cysteine desulfurase IscS"/>
    <property type="match status" value="1"/>
</dbReference>
<dbReference type="Gene3D" id="3.90.1150.10">
    <property type="entry name" value="Aspartate Aminotransferase, domain 1"/>
    <property type="match status" value="1"/>
</dbReference>
<dbReference type="Gene3D" id="3.40.640.10">
    <property type="entry name" value="Type I PLP-dependent aspartate aminotransferase-like (Major domain)"/>
    <property type="match status" value="1"/>
</dbReference>
<dbReference type="HAMAP" id="MF_00331">
    <property type="entry name" value="Cys_desulf_IscS"/>
    <property type="match status" value="1"/>
</dbReference>
<dbReference type="InterPro" id="IPR000192">
    <property type="entry name" value="Aminotrans_V_dom"/>
</dbReference>
<dbReference type="InterPro" id="IPR020578">
    <property type="entry name" value="Aminotrans_V_PyrdxlP_BS"/>
</dbReference>
<dbReference type="InterPro" id="IPR010240">
    <property type="entry name" value="Cys_deSase_IscS"/>
</dbReference>
<dbReference type="InterPro" id="IPR016454">
    <property type="entry name" value="Cysteine_dSase"/>
</dbReference>
<dbReference type="InterPro" id="IPR015424">
    <property type="entry name" value="PyrdxlP-dep_Trfase"/>
</dbReference>
<dbReference type="InterPro" id="IPR015421">
    <property type="entry name" value="PyrdxlP-dep_Trfase_major"/>
</dbReference>
<dbReference type="InterPro" id="IPR015422">
    <property type="entry name" value="PyrdxlP-dep_Trfase_small"/>
</dbReference>
<dbReference type="NCBIfam" id="TIGR02006">
    <property type="entry name" value="IscS"/>
    <property type="match status" value="1"/>
</dbReference>
<dbReference type="NCBIfam" id="NF010611">
    <property type="entry name" value="PRK14012.1"/>
    <property type="match status" value="1"/>
</dbReference>
<dbReference type="PANTHER" id="PTHR11601:SF34">
    <property type="entry name" value="CYSTEINE DESULFURASE"/>
    <property type="match status" value="1"/>
</dbReference>
<dbReference type="PANTHER" id="PTHR11601">
    <property type="entry name" value="CYSTEINE DESULFURYLASE FAMILY MEMBER"/>
    <property type="match status" value="1"/>
</dbReference>
<dbReference type="Pfam" id="PF00266">
    <property type="entry name" value="Aminotran_5"/>
    <property type="match status" value="1"/>
</dbReference>
<dbReference type="PIRSF" id="PIRSF005572">
    <property type="entry name" value="NifS"/>
    <property type="match status" value="1"/>
</dbReference>
<dbReference type="SUPFAM" id="SSF53383">
    <property type="entry name" value="PLP-dependent transferases"/>
    <property type="match status" value="1"/>
</dbReference>
<dbReference type="PROSITE" id="PS00595">
    <property type="entry name" value="AA_TRANSFER_CLASS_5"/>
    <property type="match status" value="1"/>
</dbReference>
<reference key="1">
    <citation type="journal article" date="2008" name="PLoS ONE">
        <title>Comparative analysis of Acinetobacters: three genomes for three lifestyles.</title>
        <authorList>
            <person name="Vallenet D."/>
            <person name="Nordmann P."/>
            <person name="Barbe V."/>
            <person name="Poirel L."/>
            <person name="Mangenot S."/>
            <person name="Bataille E."/>
            <person name="Dossat C."/>
            <person name="Gas S."/>
            <person name="Kreimeyer A."/>
            <person name="Lenoble P."/>
            <person name="Oztas S."/>
            <person name="Poulain J."/>
            <person name="Segurens B."/>
            <person name="Robert C."/>
            <person name="Abergel C."/>
            <person name="Claverie J.-M."/>
            <person name="Raoult D."/>
            <person name="Medigue C."/>
            <person name="Weissenbach J."/>
            <person name="Cruveiller S."/>
        </authorList>
    </citation>
    <scope>NUCLEOTIDE SEQUENCE [LARGE SCALE GENOMIC DNA]</scope>
    <source>
        <strain>AYE</strain>
    </source>
</reference>
<name>ISCS_ACIBY</name>
<organism>
    <name type="scientific">Acinetobacter baumannii (strain AYE)</name>
    <dbReference type="NCBI Taxonomy" id="509173"/>
    <lineage>
        <taxon>Bacteria</taxon>
        <taxon>Pseudomonadati</taxon>
        <taxon>Pseudomonadota</taxon>
        <taxon>Gammaproteobacteria</taxon>
        <taxon>Moraxellales</taxon>
        <taxon>Moraxellaceae</taxon>
        <taxon>Acinetobacter</taxon>
        <taxon>Acinetobacter calcoaceticus/baumannii complex</taxon>
    </lineage>
</organism>
<proteinExistence type="inferred from homology"/>
<comment type="function">
    <text evidence="1">Master enzyme that delivers sulfur to a number of partners involved in Fe-S cluster assembly, tRNA modification or cofactor biosynthesis. Catalyzes the removal of elemental sulfur atoms from cysteine to produce alanine. Functions as a sulfur delivery protein for Fe-S cluster synthesis onto IscU, an Fe-S scaffold assembly protein, as well as other S acceptor proteins.</text>
</comment>
<comment type="catalytic activity">
    <reaction evidence="1">
        <text>(sulfur carrier)-H + L-cysteine = (sulfur carrier)-SH + L-alanine</text>
        <dbReference type="Rhea" id="RHEA:43892"/>
        <dbReference type="Rhea" id="RHEA-COMP:14737"/>
        <dbReference type="Rhea" id="RHEA-COMP:14739"/>
        <dbReference type="ChEBI" id="CHEBI:29917"/>
        <dbReference type="ChEBI" id="CHEBI:35235"/>
        <dbReference type="ChEBI" id="CHEBI:57972"/>
        <dbReference type="ChEBI" id="CHEBI:64428"/>
        <dbReference type="EC" id="2.8.1.7"/>
    </reaction>
</comment>
<comment type="cofactor">
    <cofactor evidence="1">
        <name>pyridoxal 5'-phosphate</name>
        <dbReference type="ChEBI" id="CHEBI:597326"/>
    </cofactor>
</comment>
<comment type="pathway">
    <text evidence="1">Cofactor biosynthesis; iron-sulfur cluster biosynthesis.</text>
</comment>
<comment type="subunit">
    <text evidence="1">Homodimer. Forms a heterotetramer with IscU, interacts with other sulfur acceptors.</text>
</comment>
<comment type="subcellular location">
    <subcellularLocation>
        <location evidence="1">Cytoplasm</location>
    </subcellularLocation>
</comment>
<comment type="similarity">
    <text evidence="1">Belongs to the class-V pyridoxal-phosphate-dependent aminotransferase family. NifS/IscS subfamily.</text>
</comment>
<sequence length="405" mass="44853">MKRPIYLDYAATTPVDPQVAERMMECLTFDGTFGNAASRSHAYGWQAEEKVEYAREQVANLIKADPREIVWTSGATESDNLALKGVAQFYASKGKHIITSKIEHKAVLDPCRELEEQGFEITYLEPEPQTGLITPEMVKAALRPDTILVSLMMVNNEIGTVTDVAAIGELTRANKTFFHVDAAQAAGKVDIDLSTMKIDLMSFSAHKIYGPKGIGALYVRRSPRVRLKAQIHGGGHERGMRSGTLATHQIVGMGEAFELAGKTMHAEQERIRKLRDKLWNGLQDLEQVFLNGHPTQNVANYLNVSFNFVEGESLMMSLKDAAVSSGSACTSATLEPSYVLRALGLSDELAHSSIRFSFGKYTTEEDIDHVLTITKAAVEKLRELSPLWDMYKEGIDLSTVEWAEH</sequence>
<accession>B0VD51</accession>
<feature type="chain" id="PRO_1000119618" description="Cysteine desulfurase IscS">
    <location>
        <begin position="1"/>
        <end position="405"/>
    </location>
</feature>
<feature type="active site" description="Cysteine persulfide intermediate" evidence="1">
    <location>
        <position position="329"/>
    </location>
</feature>
<feature type="binding site" evidence="1">
    <location>
        <begin position="75"/>
        <end position="76"/>
    </location>
    <ligand>
        <name>pyridoxal 5'-phosphate</name>
        <dbReference type="ChEBI" id="CHEBI:597326"/>
    </ligand>
</feature>
<feature type="binding site" evidence="1">
    <location>
        <position position="156"/>
    </location>
    <ligand>
        <name>pyridoxal 5'-phosphate</name>
        <dbReference type="ChEBI" id="CHEBI:597326"/>
    </ligand>
</feature>
<feature type="binding site" evidence="1">
    <location>
        <position position="184"/>
    </location>
    <ligand>
        <name>pyridoxal 5'-phosphate</name>
        <dbReference type="ChEBI" id="CHEBI:597326"/>
    </ligand>
</feature>
<feature type="binding site" evidence="1">
    <location>
        <begin position="204"/>
        <end position="206"/>
    </location>
    <ligand>
        <name>pyridoxal 5'-phosphate</name>
        <dbReference type="ChEBI" id="CHEBI:597326"/>
    </ligand>
</feature>
<feature type="binding site" evidence="1">
    <location>
        <position position="244"/>
    </location>
    <ligand>
        <name>pyridoxal 5'-phosphate</name>
        <dbReference type="ChEBI" id="CHEBI:597326"/>
    </ligand>
</feature>
<feature type="binding site" description="via persulfide group" evidence="1">
    <location>
        <position position="329"/>
    </location>
    <ligand>
        <name>[2Fe-2S] cluster</name>
        <dbReference type="ChEBI" id="CHEBI:190135"/>
        <note>ligand shared with IscU</note>
    </ligand>
</feature>
<feature type="modified residue" description="N6-(pyridoxal phosphate)lysine" evidence="1">
    <location>
        <position position="207"/>
    </location>
</feature>
<gene>
    <name evidence="1" type="primary">iscS</name>
    <name type="ordered locus">ABAYE2021</name>
</gene>
<keyword id="KW-0001">2Fe-2S</keyword>
<keyword id="KW-0963">Cytoplasm</keyword>
<keyword id="KW-0408">Iron</keyword>
<keyword id="KW-0411">Iron-sulfur</keyword>
<keyword id="KW-0479">Metal-binding</keyword>
<keyword id="KW-0663">Pyridoxal phosphate</keyword>
<keyword id="KW-0808">Transferase</keyword>